<name>RL2_RICTY</name>
<gene>
    <name evidence="1" type="primary">rplB</name>
    <name type="ordered locus">RT0648</name>
</gene>
<sequence>MALKNFNPITPSLRELVQVDKTNLWKGRPLKSLTKGMSKTGGRNQQGRITSWHRGGGHKKLYRVIDFKRKKIDIFAVVERIEYDPNRTAFIALIKYDDGEYSYILAPQKLSIGDRVISSQAADIKIGNCLPLKSIPIGTTLHNVEMKVGKGGQIARSAGTSVELVGKDSGYAQIKLRSGEFRLVPLDCKATIGSISNPDQKNINLGKAGRNRWLGWRPHVRGVAMNPIDHPHGGGEGKTSGGRHPVTPWGFSTKGKKTRKNKRTSKFIVKKRK</sequence>
<accession>Q68W81</accession>
<organism>
    <name type="scientific">Rickettsia typhi (strain ATCC VR-144 / Wilmington)</name>
    <dbReference type="NCBI Taxonomy" id="257363"/>
    <lineage>
        <taxon>Bacteria</taxon>
        <taxon>Pseudomonadati</taxon>
        <taxon>Pseudomonadota</taxon>
        <taxon>Alphaproteobacteria</taxon>
        <taxon>Rickettsiales</taxon>
        <taxon>Rickettsiaceae</taxon>
        <taxon>Rickettsieae</taxon>
        <taxon>Rickettsia</taxon>
        <taxon>typhus group</taxon>
    </lineage>
</organism>
<reference key="1">
    <citation type="journal article" date="2004" name="J. Bacteriol.">
        <title>Complete genome sequence of Rickettsia typhi and comparison with sequences of other Rickettsiae.</title>
        <authorList>
            <person name="McLeod M.P."/>
            <person name="Qin X."/>
            <person name="Karpathy S.E."/>
            <person name="Gioia J."/>
            <person name="Highlander S.K."/>
            <person name="Fox G.E."/>
            <person name="McNeill T.Z."/>
            <person name="Jiang H."/>
            <person name="Muzny D."/>
            <person name="Jacob L.S."/>
            <person name="Hawes A.C."/>
            <person name="Sodergren E."/>
            <person name="Gill R."/>
            <person name="Hume J."/>
            <person name="Morgan M."/>
            <person name="Fan G."/>
            <person name="Amin A.G."/>
            <person name="Gibbs R.A."/>
            <person name="Hong C."/>
            <person name="Yu X.-J."/>
            <person name="Walker D.H."/>
            <person name="Weinstock G.M."/>
        </authorList>
    </citation>
    <scope>NUCLEOTIDE SEQUENCE [LARGE SCALE GENOMIC DNA]</scope>
    <source>
        <strain>ATCC VR-144 / Wilmington</strain>
    </source>
</reference>
<comment type="function">
    <text evidence="1">One of the primary rRNA binding proteins. Required for association of the 30S and 50S subunits to form the 70S ribosome, for tRNA binding and peptide bond formation. It has been suggested to have peptidyltransferase activity; this is somewhat controversial. Makes several contacts with the 16S rRNA in the 70S ribosome.</text>
</comment>
<comment type="subunit">
    <text evidence="1">Part of the 50S ribosomal subunit. Forms a bridge to the 30S subunit in the 70S ribosome.</text>
</comment>
<comment type="similarity">
    <text evidence="1">Belongs to the universal ribosomal protein uL2 family.</text>
</comment>
<dbReference type="EMBL" id="AE017197">
    <property type="protein sequence ID" value="AAU04111.1"/>
    <property type="molecule type" value="Genomic_DNA"/>
</dbReference>
<dbReference type="RefSeq" id="WP_011191088.1">
    <property type="nucleotide sequence ID" value="NC_006142.1"/>
</dbReference>
<dbReference type="SMR" id="Q68W81"/>
<dbReference type="KEGG" id="rty:RT0648"/>
<dbReference type="eggNOG" id="COG0090">
    <property type="taxonomic scope" value="Bacteria"/>
</dbReference>
<dbReference type="HOGENOM" id="CLU_036235_2_1_5"/>
<dbReference type="OrthoDB" id="9778722at2"/>
<dbReference type="Proteomes" id="UP000000604">
    <property type="component" value="Chromosome"/>
</dbReference>
<dbReference type="GO" id="GO:0015934">
    <property type="term" value="C:large ribosomal subunit"/>
    <property type="evidence" value="ECO:0007669"/>
    <property type="project" value="InterPro"/>
</dbReference>
<dbReference type="GO" id="GO:0019843">
    <property type="term" value="F:rRNA binding"/>
    <property type="evidence" value="ECO:0007669"/>
    <property type="project" value="UniProtKB-UniRule"/>
</dbReference>
<dbReference type="GO" id="GO:0003735">
    <property type="term" value="F:structural constituent of ribosome"/>
    <property type="evidence" value="ECO:0007669"/>
    <property type="project" value="InterPro"/>
</dbReference>
<dbReference type="GO" id="GO:0016740">
    <property type="term" value="F:transferase activity"/>
    <property type="evidence" value="ECO:0007669"/>
    <property type="project" value="InterPro"/>
</dbReference>
<dbReference type="GO" id="GO:0006412">
    <property type="term" value="P:translation"/>
    <property type="evidence" value="ECO:0007669"/>
    <property type="project" value="UniProtKB-UniRule"/>
</dbReference>
<dbReference type="FunFam" id="2.30.30.30:FF:000001">
    <property type="entry name" value="50S ribosomal protein L2"/>
    <property type="match status" value="1"/>
</dbReference>
<dbReference type="FunFam" id="2.40.50.140:FF:000003">
    <property type="entry name" value="50S ribosomal protein L2"/>
    <property type="match status" value="1"/>
</dbReference>
<dbReference type="FunFam" id="4.10.950.10:FF:000001">
    <property type="entry name" value="50S ribosomal protein L2"/>
    <property type="match status" value="1"/>
</dbReference>
<dbReference type="Gene3D" id="2.30.30.30">
    <property type="match status" value="1"/>
</dbReference>
<dbReference type="Gene3D" id="2.40.50.140">
    <property type="entry name" value="Nucleic acid-binding proteins"/>
    <property type="match status" value="1"/>
</dbReference>
<dbReference type="Gene3D" id="4.10.950.10">
    <property type="entry name" value="Ribosomal protein L2, domain 3"/>
    <property type="match status" value="1"/>
</dbReference>
<dbReference type="HAMAP" id="MF_01320_B">
    <property type="entry name" value="Ribosomal_uL2_B"/>
    <property type="match status" value="1"/>
</dbReference>
<dbReference type="InterPro" id="IPR012340">
    <property type="entry name" value="NA-bd_OB-fold"/>
</dbReference>
<dbReference type="InterPro" id="IPR014722">
    <property type="entry name" value="Rib_uL2_dom2"/>
</dbReference>
<dbReference type="InterPro" id="IPR002171">
    <property type="entry name" value="Ribosomal_uL2"/>
</dbReference>
<dbReference type="InterPro" id="IPR005880">
    <property type="entry name" value="Ribosomal_uL2_bac/org-type"/>
</dbReference>
<dbReference type="InterPro" id="IPR022669">
    <property type="entry name" value="Ribosomal_uL2_C"/>
</dbReference>
<dbReference type="InterPro" id="IPR022671">
    <property type="entry name" value="Ribosomal_uL2_CS"/>
</dbReference>
<dbReference type="InterPro" id="IPR014726">
    <property type="entry name" value="Ribosomal_uL2_dom3"/>
</dbReference>
<dbReference type="InterPro" id="IPR022666">
    <property type="entry name" value="Ribosomal_uL2_RNA-bd_dom"/>
</dbReference>
<dbReference type="InterPro" id="IPR008991">
    <property type="entry name" value="Translation_prot_SH3-like_sf"/>
</dbReference>
<dbReference type="NCBIfam" id="TIGR01171">
    <property type="entry name" value="rplB_bact"/>
    <property type="match status" value="1"/>
</dbReference>
<dbReference type="PANTHER" id="PTHR13691:SF5">
    <property type="entry name" value="LARGE RIBOSOMAL SUBUNIT PROTEIN UL2M"/>
    <property type="match status" value="1"/>
</dbReference>
<dbReference type="PANTHER" id="PTHR13691">
    <property type="entry name" value="RIBOSOMAL PROTEIN L2"/>
    <property type="match status" value="1"/>
</dbReference>
<dbReference type="Pfam" id="PF00181">
    <property type="entry name" value="Ribosomal_L2"/>
    <property type="match status" value="1"/>
</dbReference>
<dbReference type="Pfam" id="PF03947">
    <property type="entry name" value="Ribosomal_L2_C"/>
    <property type="match status" value="1"/>
</dbReference>
<dbReference type="PIRSF" id="PIRSF002158">
    <property type="entry name" value="Ribosomal_L2"/>
    <property type="match status" value="1"/>
</dbReference>
<dbReference type="SMART" id="SM01383">
    <property type="entry name" value="Ribosomal_L2"/>
    <property type="match status" value="1"/>
</dbReference>
<dbReference type="SMART" id="SM01382">
    <property type="entry name" value="Ribosomal_L2_C"/>
    <property type="match status" value="1"/>
</dbReference>
<dbReference type="SUPFAM" id="SSF50249">
    <property type="entry name" value="Nucleic acid-binding proteins"/>
    <property type="match status" value="1"/>
</dbReference>
<dbReference type="SUPFAM" id="SSF50104">
    <property type="entry name" value="Translation proteins SH3-like domain"/>
    <property type="match status" value="1"/>
</dbReference>
<dbReference type="PROSITE" id="PS00467">
    <property type="entry name" value="RIBOSOMAL_L2"/>
    <property type="match status" value="1"/>
</dbReference>
<evidence type="ECO:0000255" key="1">
    <source>
        <dbReference type="HAMAP-Rule" id="MF_01320"/>
    </source>
</evidence>
<evidence type="ECO:0000256" key="2">
    <source>
        <dbReference type="SAM" id="MobiDB-lite"/>
    </source>
</evidence>
<evidence type="ECO:0000305" key="3"/>
<protein>
    <recommendedName>
        <fullName evidence="1">Large ribosomal subunit protein uL2</fullName>
    </recommendedName>
    <alternativeName>
        <fullName evidence="3">50S ribosomal protein L2</fullName>
    </alternativeName>
</protein>
<keyword id="KW-0687">Ribonucleoprotein</keyword>
<keyword id="KW-0689">Ribosomal protein</keyword>
<keyword id="KW-0694">RNA-binding</keyword>
<keyword id="KW-0699">rRNA-binding</keyword>
<feature type="chain" id="PRO_0000237236" description="Large ribosomal subunit protein uL2">
    <location>
        <begin position="1"/>
        <end position="273"/>
    </location>
</feature>
<feature type="region of interest" description="Disordered" evidence="2">
    <location>
        <begin position="228"/>
        <end position="273"/>
    </location>
</feature>
<feature type="compositionally biased region" description="Basic residues" evidence="2">
    <location>
        <begin position="254"/>
        <end position="273"/>
    </location>
</feature>
<proteinExistence type="inferred from homology"/>